<gene>
    <name type="primary">PSME1</name>
</gene>
<name>PSME1_BOVIN</name>
<protein>
    <recommendedName>
        <fullName>Proteasome activator complex subunit 1</fullName>
    </recommendedName>
    <alternativeName>
        <fullName>Proteasome activator 28 subunit alpha</fullName>
        <shortName>PA28a</shortName>
        <shortName>PA28alpha</shortName>
    </alternativeName>
</protein>
<proteinExistence type="evidence at protein level"/>
<organism>
    <name type="scientific">Bos taurus</name>
    <name type="common">Bovine</name>
    <dbReference type="NCBI Taxonomy" id="9913"/>
    <lineage>
        <taxon>Eukaryota</taxon>
        <taxon>Metazoa</taxon>
        <taxon>Chordata</taxon>
        <taxon>Craniata</taxon>
        <taxon>Vertebrata</taxon>
        <taxon>Euteleostomi</taxon>
        <taxon>Mammalia</taxon>
        <taxon>Eutheria</taxon>
        <taxon>Laurasiatheria</taxon>
        <taxon>Artiodactyla</taxon>
        <taxon>Ruminantia</taxon>
        <taxon>Pecora</taxon>
        <taxon>Bovidae</taxon>
        <taxon>Bovinae</taxon>
        <taxon>Bos</taxon>
    </lineage>
</organism>
<comment type="function">
    <text>Implicated in immunoproteasome assembly and required for efficient antigen processing. The PA28 activator complex enhances the generation of class I binding peptides by altering the cleavage pattern of the proteasome.</text>
</comment>
<comment type="subunit">
    <text>Heterodimer of PSME1 and PSME2, which forms a hexameric ring. PSME1 can form homoheptamers.</text>
</comment>
<comment type="similarity">
    <text evidence="2">Belongs to the PA28 family.</text>
</comment>
<keyword id="KW-0903">Direct protein sequencing</keyword>
<keyword id="KW-0647">Proteasome</keyword>
<keyword id="KW-1185">Reference proteome</keyword>
<accession>Q4U5R3</accession>
<accession>Q9TR86</accession>
<reference key="1">
    <citation type="submission" date="2005-04" db="EMBL/GenBank/DDBJ databases">
        <title>Molecular cloning and characterization of bovine proteasome activator 28 alpha subunit (PSME1) gene.</title>
        <authorList>
            <person name="Cao S.Z."/>
            <person name="Lee H.B."/>
            <person name="Wang A.H."/>
            <person name="Zhao X.X."/>
            <person name="Du L.X."/>
        </authorList>
    </citation>
    <scope>NUCLEOTIDE SEQUENCE [MRNA]</scope>
</reference>
<reference key="2">
    <citation type="journal article" date="1994" name="J. Biol. Chem.">
        <title>PA28, an activator of the 20 S proteasome, is composed of two nonidentical but homologous subunits.</title>
        <authorList>
            <person name="Mott J.D."/>
            <person name="Pramanik B.C."/>
            <person name="Moomaw C.R."/>
            <person name="Afendis S.J."/>
            <person name="DeMartino G.N."/>
            <person name="Slaughter C.A."/>
        </authorList>
    </citation>
    <scope>PROTEIN SEQUENCE OF 37-58</scope>
    <source>
        <tissue>Heart</tissue>
    </source>
</reference>
<evidence type="ECO:0000256" key="1">
    <source>
        <dbReference type="SAM" id="MobiDB-lite"/>
    </source>
</evidence>
<evidence type="ECO:0000305" key="2"/>
<dbReference type="EMBL" id="DQ010410">
    <property type="protein sequence ID" value="AAY33867.1"/>
    <property type="molecule type" value="mRNA"/>
</dbReference>
<dbReference type="SMR" id="Q4U5R3"/>
<dbReference type="FunCoup" id="Q4U5R3">
    <property type="interactions" value="935"/>
</dbReference>
<dbReference type="IntAct" id="Q4U5R3">
    <property type="interactions" value="1"/>
</dbReference>
<dbReference type="STRING" id="9913.ENSBTAP00000028520"/>
<dbReference type="PaxDb" id="9913-ENSBTAP00000028520"/>
<dbReference type="PeptideAtlas" id="Q4U5R3"/>
<dbReference type="eggNOG" id="KOG4470">
    <property type="taxonomic scope" value="Eukaryota"/>
</dbReference>
<dbReference type="InParanoid" id="Q4U5R3"/>
<dbReference type="OrthoDB" id="6591885at2759"/>
<dbReference type="Proteomes" id="UP000009136">
    <property type="component" value="Unplaced"/>
</dbReference>
<dbReference type="GO" id="GO:0005737">
    <property type="term" value="C:cytoplasm"/>
    <property type="evidence" value="ECO:0000318"/>
    <property type="project" value="GO_Central"/>
</dbReference>
<dbReference type="GO" id="GO:0005654">
    <property type="term" value="C:nucleoplasm"/>
    <property type="evidence" value="ECO:0000318"/>
    <property type="project" value="GO_Central"/>
</dbReference>
<dbReference type="GO" id="GO:0008537">
    <property type="term" value="C:proteasome activator complex"/>
    <property type="evidence" value="ECO:0007669"/>
    <property type="project" value="InterPro"/>
</dbReference>
<dbReference type="GO" id="GO:0061133">
    <property type="term" value="F:endopeptidase activator activity"/>
    <property type="evidence" value="ECO:0000318"/>
    <property type="project" value="GO_Central"/>
</dbReference>
<dbReference type="GO" id="GO:2000045">
    <property type="term" value="P:regulation of G1/S transition of mitotic cell cycle"/>
    <property type="evidence" value="ECO:0000318"/>
    <property type="project" value="GO_Central"/>
</dbReference>
<dbReference type="GO" id="GO:0061136">
    <property type="term" value="P:regulation of proteasomal protein catabolic process"/>
    <property type="evidence" value="ECO:0000318"/>
    <property type="project" value="GO_Central"/>
</dbReference>
<dbReference type="FunFam" id="1.20.120.180:FF:000002">
    <property type="entry name" value="Proteasome activator complex subunit 1"/>
    <property type="match status" value="1"/>
</dbReference>
<dbReference type="FunFam" id="1.20.5.120:FF:000001">
    <property type="entry name" value="Proteasome activator complex subunit 3"/>
    <property type="match status" value="1"/>
</dbReference>
<dbReference type="Gene3D" id="1.20.120.180">
    <property type="entry name" value="Proteasome activator pa28, C-terminal domain"/>
    <property type="match status" value="1"/>
</dbReference>
<dbReference type="Gene3D" id="1.20.5.120">
    <property type="entry name" value="Proteasome activator pa28, N-terminal domain"/>
    <property type="match status" value="1"/>
</dbReference>
<dbReference type="InterPro" id="IPR003186">
    <property type="entry name" value="PA28_C"/>
</dbReference>
<dbReference type="InterPro" id="IPR036997">
    <property type="entry name" value="PA28_C_sf"/>
</dbReference>
<dbReference type="InterPro" id="IPR036996">
    <property type="entry name" value="PA28_N_sf"/>
</dbReference>
<dbReference type="InterPro" id="IPR009077">
    <property type="entry name" value="Proteasome_activ_PA28"/>
</dbReference>
<dbReference type="InterPro" id="IPR003185">
    <property type="entry name" value="Proteasome_activ_PA28_N"/>
</dbReference>
<dbReference type="InterPro" id="IPR036252">
    <property type="entry name" value="Proteasome_activ_sf"/>
</dbReference>
<dbReference type="PANTHER" id="PTHR10660:SF5">
    <property type="entry name" value="PROTEASOME ACTIVATOR COMPLEX SUBUNIT 1"/>
    <property type="match status" value="1"/>
</dbReference>
<dbReference type="PANTHER" id="PTHR10660">
    <property type="entry name" value="PROTEASOME REGULATOR PA28"/>
    <property type="match status" value="1"/>
</dbReference>
<dbReference type="Pfam" id="PF02252">
    <property type="entry name" value="PA28_C"/>
    <property type="match status" value="1"/>
</dbReference>
<dbReference type="Pfam" id="PF02251">
    <property type="entry name" value="PA28_N"/>
    <property type="match status" value="1"/>
</dbReference>
<dbReference type="SUPFAM" id="SSF47216">
    <property type="entry name" value="Proteasome activator"/>
    <property type="match status" value="1"/>
</dbReference>
<feature type="chain" id="PRO_0000161778" description="Proteasome activator complex subunit 1">
    <location>
        <begin position="1"/>
        <end position="249"/>
    </location>
</feature>
<feature type="region of interest" description="Disordered" evidence="1">
    <location>
        <begin position="55"/>
        <end position="102"/>
    </location>
</feature>
<feature type="compositionally biased region" description="Basic and acidic residues" evidence="1">
    <location>
        <begin position="68"/>
        <end position="98"/>
    </location>
</feature>
<sequence length="249" mass="28663">MATLRVLPEAQAKVDVFREDLCTKTENLLGSYFPKKISELDAFLKEPDLNEANLSNLKAPLDIPVPDPVKEKEKEERRKQQEKEDKDEKKKGEDEDKGPPCGPVGCNEKIVVLLQRVKPEIKDVIEKLNLVTTWLQLQIPRIEDGNNFGVAVQEKVFELMTALHTKLEGFHTQISKYFSERGDAVTKAAKQPHVGDYRQLVHELDEAEYRDIRLMVMEIRNAYAVLYDIILKNFEKLKKPRGETKGMIY</sequence>